<sequence length="568" mass="62651">MDQDALISKEDSEVEREASGGRESLSDVIGFLDAVLSSEPTDIGGDRSWLHNTINTLQRPGSTHRVKGEGEGEVSTSSTQDNRSGEESRVSGGTSEPEAEAHARNVDKQNIHWATGRGASTDSVPQDLGNGRDSGILEDPPNEGGYPRSGAEDENREMAANPDKRGEDQAEGLPEEIRRSAPLPDEREGRADNNGRGVEPGSPHSARVTGVLVIPSPELEEAVLQRNKRRPANSGSRSLTPVVVPSTRSPPPDHDNSTRSPPRKPPTTQDEHTNPRNTPAVRIKDRRPPTGTRSAPDRPTDGYPTHPSPETDATKKGIEENTSSMKEMATLLTSLGVIQSAQEFESSRDASYVFAKRALKSANYAEMAFNVCGLILSAEKSFANRVDENKQLLKQIQESVESFRDIYKRFSEYQKEQNSLLMSNLSTLHIITDRGGKTDNPDSPTRSPSVFAKTKENKTKATRFDPSMETMGDMRYKPDLLREDEFREEIRNPVYQERDTEPRASNASRLLPSREKPTIHSLKLVIESSPLSRAEKAAYVKSLSKCKTDQEVKAVMELVEEDIESLTN</sequence>
<protein>
    <recommendedName>
        <fullName>Phosphoprotein</fullName>
        <shortName>Protein P</shortName>
    </recommendedName>
</protein>
<feature type="chain" id="PRO_0000142715" description="Phosphoprotein">
    <location>
        <begin position="1"/>
        <end position="568"/>
    </location>
</feature>
<feature type="region of interest" description="Disordered" evidence="5">
    <location>
        <begin position="1"/>
        <end position="23"/>
    </location>
</feature>
<feature type="region of interest" description="N0 binding" evidence="2">
    <location>
        <begin position="33"/>
        <end position="41"/>
    </location>
</feature>
<feature type="region of interest" description="Disordered" evidence="5">
    <location>
        <begin position="54"/>
        <end position="317"/>
    </location>
</feature>
<feature type="region of interest" description="Multimerization" evidence="3">
    <location>
        <begin position="344"/>
        <end position="411"/>
    </location>
</feature>
<feature type="region of interest" description="L protein binding" evidence="2">
    <location>
        <begin position="412"/>
        <end position="445"/>
    </location>
</feature>
<feature type="region of interest" description="Disordered" evidence="5">
    <location>
        <begin position="433"/>
        <end position="462"/>
    </location>
</feature>
<feature type="region of interest" description="Interaction with the nucleocapsid (N-RNA)" evidence="2">
    <location>
        <begin position="479"/>
        <end position="568"/>
    </location>
</feature>
<feature type="coiled-coil region" evidence="1">
    <location>
        <begin position="364"/>
        <end position="429"/>
    </location>
</feature>
<feature type="compositionally biased region" description="Basic and acidic residues" evidence="5">
    <location>
        <begin position="7"/>
        <end position="20"/>
    </location>
</feature>
<feature type="compositionally biased region" description="Basic and acidic residues" evidence="5">
    <location>
        <begin position="99"/>
        <end position="110"/>
    </location>
</feature>
<feature type="compositionally biased region" description="Basic and acidic residues" evidence="5">
    <location>
        <begin position="150"/>
        <end position="168"/>
    </location>
</feature>
<feature type="compositionally biased region" description="Basic and acidic residues" evidence="5">
    <location>
        <begin position="175"/>
        <end position="193"/>
    </location>
</feature>
<feature type="compositionally biased region" description="Basic and acidic residues" evidence="5">
    <location>
        <begin position="453"/>
        <end position="462"/>
    </location>
</feature>
<feature type="modified residue" description="Phosphoserine; by host" evidence="1">
    <location>
        <position position="249"/>
    </location>
</feature>
<feature type="modified residue" description="Phosphoserine; by host" evidence="1">
    <location>
        <position position="257"/>
    </location>
</feature>
<feature type="modified residue" description="Phosphoserine; by host" evidence="1">
    <location>
        <position position="260"/>
    </location>
</feature>
<feature type="modified residue" description="Phosphoserine; by host" evidence="1">
    <location>
        <position position="447"/>
    </location>
</feature>
<feature type="modified residue" description="Phosphoserine; by host" evidence="1">
    <location>
        <position position="449"/>
    </location>
</feature>
<evidence type="ECO:0000250" key="1"/>
<evidence type="ECO:0000250" key="2">
    <source>
        <dbReference type="UniProtKB" id="P04859"/>
    </source>
</evidence>
<evidence type="ECO:0000250" key="3">
    <source>
        <dbReference type="UniProtKB" id="P06162"/>
    </source>
</evidence>
<evidence type="ECO:0000250" key="4">
    <source>
        <dbReference type="UniProtKB" id="Q77M42"/>
    </source>
</evidence>
<evidence type="ECO:0000256" key="5">
    <source>
        <dbReference type="SAM" id="MobiDB-lite"/>
    </source>
</evidence>
<evidence type="ECO:0000305" key="6"/>
<organism>
    <name type="scientific">Sendai virus (strain Ohita)</name>
    <name type="common">SeV</name>
    <dbReference type="NCBI Taxonomy" id="302272"/>
    <lineage>
        <taxon>Viruses</taxon>
        <taxon>Riboviria</taxon>
        <taxon>Orthornavirae</taxon>
        <taxon>Negarnaviricota</taxon>
        <taxon>Haploviricotina</taxon>
        <taxon>Monjiviricetes</taxon>
        <taxon>Mononegavirales</taxon>
        <taxon>Paramyxoviridae</taxon>
        <taxon>Feraresvirinae</taxon>
        <taxon>Respirovirus</taxon>
        <taxon>Respirovirus muris</taxon>
    </lineage>
</organism>
<dbReference type="EMBL" id="AB005796">
    <property type="protein sequence ID" value="BAA24395.1"/>
    <property type="molecule type" value="Genomic_RNA"/>
</dbReference>
<dbReference type="EMBL" id="AB005795">
    <property type="protein sequence ID" value="BAA24386.1"/>
    <property type="molecule type" value="Genomic_RNA"/>
</dbReference>
<dbReference type="SMR" id="O57285"/>
<dbReference type="KEGG" id="vg:1489780"/>
<dbReference type="Proteomes" id="UP000006563">
    <property type="component" value="Genome"/>
</dbReference>
<dbReference type="Proteomes" id="UP000007311">
    <property type="component" value="Segment"/>
</dbReference>
<dbReference type="GO" id="GO:0030430">
    <property type="term" value="C:host cell cytoplasm"/>
    <property type="evidence" value="ECO:0007669"/>
    <property type="project" value="UniProtKB-SubCell"/>
</dbReference>
<dbReference type="GO" id="GO:0003723">
    <property type="term" value="F:RNA binding"/>
    <property type="evidence" value="ECO:0007669"/>
    <property type="project" value="InterPro"/>
</dbReference>
<dbReference type="GO" id="GO:0003968">
    <property type="term" value="F:RNA-directed RNA polymerase activity"/>
    <property type="evidence" value="ECO:0007669"/>
    <property type="project" value="InterPro"/>
</dbReference>
<dbReference type="GO" id="GO:0006351">
    <property type="term" value="P:DNA-templated transcription"/>
    <property type="evidence" value="ECO:0007669"/>
    <property type="project" value="InterPro"/>
</dbReference>
<dbReference type="GO" id="GO:0019079">
    <property type="term" value="P:viral genome replication"/>
    <property type="evidence" value="ECO:0007669"/>
    <property type="project" value="InterPro"/>
</dbReference>
<dbReference type="CDD" id="cd21031">
    <property type="entry name" value="MEV_P-protein-C_like"/>
    <property type="match status" value="1"/>
</dbReference>
<dbReference type="Gene3D" id="1.10.287.340">
    <property type="match status" value="1"/>
</dbReference>
<dbReference type="Gene3D" id="1.10.8.10">
    <property type="entry name" value="DNA helicase RuvA subunit, C-terminal domain"/>
    <property type="match status" value="1"/>
</dbReference>
<dbReference type="Gene3D" id="1.10.287.320">
    <property type="entry name" value="Viral phosphoprotein oligmorisation site domain"/>
    <property type="match status" value="1"/>
</dbReference>
<dbReference type="InterPro" id="IPR002693">
    <property type="entry name" value="Paramyxo_PProtein_C"/>
</dbReference>
<dbReference type="InterPro" id="IPR043097">
    <property type="entry name" value="PProtein_oligomer_dom1"/>
</dbReference>
<dbReference type="InterPro" id="IPR016075">
    <property type="entry name" value="RNA_pol_Pprot-P_XD_paramyxovir"/>
</dbReference>
<dbReference type="Pfam" id="PF01806">
    <property type="entry name" value="Paramyxo_P"/>
    <property type="match status" value="1"/>
</dbReference>
<dbReference type="SUPFAM" id="SSF58034">
    <property type="entry name" value="Multimerization domain of the phosphoprotein from sendai virus"/>
    <property type="match status" value="1"/>
</dbReference>
<dbReference type="SUPFAM" id="SSF101089">
    <property type="entry name" value="Phosphoprotein XD domain"/>
    <property type="match status" value="1"/>
</dbReference>
<reference key="1">
    <citation type="journal article" date="1997" name="J. Gen. Virol.">
        <title>Isolation of an avirulent mutant of Sendai virus with two amino acid mutations from a highly virulent field strain through adaptation to LLC-MK2 cells.</title>
        <authorList>
            <person name="Itoh M."/>
            <person name="Isegawa Y."/>
            <person name="Hotta H."/>
            <person name="Homma M."/>
        </authorList>
    </citation>
    <scope>NUCLEOTIDE SEQUENCE [GENOMIC RNA]</scope>
</reference>
<organismHost>
    <name type="scientific">Cavia cutleri</name>
    <name type="common">Guinea pig</name>
    <dbReference type="NCBI Taxonomy" id="10144"/>
</organismHost>
<organismHost>
    <name type="scientific">Cricetidae sp.</name>
    <name type="common">Hamster</name>
    <dbReference type="NCBI Taxonomy" id="36483"/>
</organismHost>
<organismHost>
    <name type="scientific">Mus musculus</name>
    <name type="common">Mouse</name>
    <dbReference type="NCBI Taxonomy" id="10090"/>
</organismHost>
<organismHost>
    <name type="scientific">Rattus norvegicus</name>
    <name type="common">Rat</name>
    <dbReference type="NCBI Taxonomy" id="10116"/>
</organismHost>
<name>PHOSP_SENDO</name>
<gene>
    <name type="primary">P/V/C</name>
</gene>
<accession>O57285</accession>
<comment type="function">
    <text evidence="3 4">Essential cofactor of the RNA polymerase L that plays a central role in the transcription and replication by forming the polymerase complex with RNA polymerase L and recruiting L to the genomic N-RNA template for RNA synthesis. Also plays a central role in the encapsidation of nascent RNA chains by forming the encapsidation complex with the nucleocapsid protein N (N-P complex). Acts as a chaperone for newly synthesized free N protein, so-called N0, allowing encapsidation of nascent RNA chains during replication (By similarity). The nucleoprotein protein N prevents excessive phosphorylation of P, which leads to down-regulation of viral transcription/ replication. Participates, together with N, in the formation of viral factories (viroplasms), which are large inclusions in the host cytoplasm where replication takes place (By similarity). Recruits host PI4KB and remodel the host endoplasmic reticulum membrane to form viral replication factories (By similarity).</text>
</comment>
<comment type="subunit">
    <text evidence="2">Homotetramer. Interacts (via multimerization domain) with polymerase L; this interaction forms the polymerase complex. Interacts (via N-terminus) with N0; this interaction allows P to chaperon N0 before encapsidation and form the N-P complex. Interacts (via C-terminus) with N-RNA template; this interaction positions the polymerase on the template.</text>
</comment>
<comment type="subcellular location">
    <subcellularLocation>
        <location>Host cytoplasm</location>
    </subcellularLocation>
</comment>
<comment type="domain">
    <text evidence="2 3">The N-terminus consists of a long intrinsically disordered tail (By similarity). The central part contains the coiled-coil multimerization domain (PMD). Forms a four-stranded coiled coil structure. The C-terminus constitutes the alpha-helical domain that binds to the nucleocapsid (N-RNA complex) (By similarity).</text>
</comment>
<comment type="PTM">
    <text evidence="2">Phosphorylated by PKC/PRKCZ, and other unknown kinases. Phosphorylation is necessary for viral transcription and replication. The N-terminus contains the majority of phosphorylated sites. Ser-249 is the major site of phosphorylation, but is not necessary for most functions.</text>
</comment>
<comment type="RNA editing">
    <location>
        <position position="318" evidence="1"/>
    </location>
    <text evidence="1">Partially edited. RNA editing at this position consists of an insertion of one or two guanine nucleotides. The sequence displayed here is the P protein, derived from the unedited RNA. The edited RNA gives rise to the V protein (+1G) (AC P69287), and the W protein (+2G) (AC P69288) (By similarity).</text>
</comment>
<comment type="miscellaneous">
    <text>The P/V/C gene has two overlapping open reading frames. One encodes the P/V/W proteins and the other the C/Y proteins.</text>
</comment>
<comment type="similarity">
    <text evidence="6">Belongs to the respirovirus P protein family.</text>
</comment>
<keyword id="KW-0143">Chaperone</keyword>
<keyword id="KW-0175">Coiled coil</keyword>
<keyword id="KW-1035">Host cytoplasm</keyword>
<keyword id="KW-0597">Phosphoprotein</keyword>
<keyword id="KW-1185">Reference proteome</keyword>
<keyword id="KW-0691">RNA editing</keyword>
<keyword id="KW-0693">Viral RNA replication</keyword>
<proteinExistence type="inferred from homology"/>